<reference key="1">
    <citation type="submission" date="2007-02" db="EMBL/GenBank/DDBJ databases">
        <title>Complete sequence of chromosome of Yersinia pestis Pestoides F.</title>
        <authorList>
            <consortium name="US DOE Joint Genome Institute"/>
            <person name="Copeland A."/>
            <person name="Lucas S."/>
            <person name="Lapidus A."/>
            <person name="Barry K."/>
            <person name="Detter J.C."/>
            <person name="Glavina del Rio T."/>
            <person name="Hammon N."/>
            <person name="Israni S."/>
            <person name="Dalin E."/>
            <person name="Tice H."/>
            <person name="Pitluck S."/>
            <person name="Di Bartolo G."/>
            <person name="Chain P."/>
            <person name="Malfatti S."/>
            <person name="Shin M."/>
            <person name="Vergez L."/>
            <person name="Schmutz J."/>
            <person name="Larimer F."/>
            <person name="Land M."/>
            <person name="Hauser L."/>
            <person name="Worsham P."/>
            <person name="Chu M."/>
            <person name="Bearden S."/>
            <person name="Garcia E."/>
            <person name="Richardson P."/>
        </authorList>
    </citation>
    <scope>NUCLEOTIDE SEQUENCE [LARGE SCALE GENOMIC DNA]</scope>
    <source>
        <strain>Pestoides F</strain>
    </source>
</reference>
<gene>
    <name type="ordered locus">YPDSF_0981</name>
</gene>
<organism>
    <name type="scientific">Yersinia pestis (strain Pestoides F)</name>
    <dbReference type="NCBI Taxonomy" id="386656"/>
    <lineage>
        <taxon>Bacteria</taxon>
        <taxon>Pseudomonadati</taxon>
        <taxon>Pseudomonadota</taxon>
        <taxon>Gammaproteobacteria</taxon>
        <taxon>Enterobacterales</taxon>
        <taxon>Yersiniaceae</taxon>
        <taxon>Yersinia</taxon>
    </lineage>
</organism>
<protein>
    <recommendedName>
        <fullName evidence="1">UPF0229 protein YPDSF_0981</fullName>
    </recommendedName>
</protein>
<dbReference type="EMBL" id="CP000668">
    <property type="protein sequence ID" value="ABP39381.1"/>
    <property type="molecule type" value="Genomic_DNA"/>
</dbReference>
<dbReference type="RefSeq" id="WP_002216501.1">
    <property type="nucleotide sequence ID" value="NZ_CP009715.1"/>
</dbReference>
<dbReference type="SMR" id="A4TJB9"/>
<dbReference type="KEGG" id="ypp:YPDSF_0981"/>
<dbReference type="PATRIC" id="fig|386656.14.peg.2865"/>
<dbReference type="HAMAP" id="MF_01232">
    <property type="entry name" value="UPF0229"/>
    <property type="match status" value="1"/>
</dbReference>
<dbReference type="InterPro" id="IPR006698">
    <property type="entry name" value="UPF0229"/>
</dbReference>
<dbReference type="NCBIfam" id="NF003707">
    <property type="entry name" value="PRK05325.1-2"/>
    <property type="match status" value="1"/>
</dbReference>
<dbReference type="NCBIfam" id="NF003708">
    <property type="entry name" value="PRK05325.1-3"/>
    <property type="match status" value="1"/>
</dbReference>
<dbReference type="PANTHER" id="PTHR30510">
    <property type="entry name" value="UPF0229 PROTEIN YEAH"/>
    <property type="match status" value="1"/>
</dbReference>
<dbReference type="PANTHER" id="PTHR30510:SF2">
    <property type="entry name" value="UPF0229 PROTEIN YEAH"/>
    <property type="match status" value="1"/>
</dbReference>
<dbReference type="Pfam" id="PF04285">
    <property type="entry name" value="DUF444"/>
    <property type="match status" value="1"/>
</dbReference>
<comment type="similarity">
    <text evidence="1">Belongs to the UPF0229 family.</text>
</comment>
<evidence type="ECO:0000255" key="1">
    <source>
        <dbReference type="HAMAP-Rule" id="MF_01232"/>
    </source>
</evidence>
<evidence type="ECO:0000256" key="2">
    <source>
        <dbReference type="SAM" id="MobiDB-lite"/>
    </source>
</evidence>
<accession>A4TJB9</accession>
<proteinExistence type="inferred from homology"/>
<sequence length="424" mass="49080">MGYFIDRRLNGKNKSMVNRQRFLRRYKSQIKQSIADAINKRSVTDIESGESVSIPIDDINEPMFHQGNGGLRHRVHPGNDHFITNDRVDRPQGGGGGGSGQGNAGKDGEGEDEFVFQISKDEYLDLLFEDLALPNLKRNQYKQLAEFKTHRAGYTSNGVPANISVVRSLQNSLARRTAMTASKRRELRELEAALTVLENSEPAQLLEEERLRKAITELKQKIARVPFIDTFDLRYKNYERRPEPSSQAVMFCLMDVSGSMDQATKDMAKRFYILLYLFLSRTYKNVDVVYIRHHTQAKEVDEQEFFYSQETGGTIVSSALKLMDEVVQERYNPAQWNIYAAQASDGDNWADDSPLCHELLAKKILPVVRYYSYIEITRRAHQTLWREYEDLEEKFDNFAIQHIREPEDIYPVFRELFHKQTVDN</sequence>
<name>Y981_YERPP</name>
<feature type="chain" id="PRO_1000066890" description="UPF0229 protein YPDSF_0981">
    <location>
        <begin position="1"/>
        <end position="424"/>
    </location>
</feature>
<feature type="region of interest" description="Disordered" evidence="2">
    <location>
        <begin position="84"/>
        <end position="109"/>
    </location>
</feature>
<feature type="compositionally biased region" description="Gly residues" evidence="2">
    <location>
        <begin position="92"/>
        <end position="105"/>
    </location>
</feature>